<name>RRF1_DEBHA</name>
<organism>
    <name type="scientific">Debaryomyces hansenii (strain ATCC 36239 / CBS 767 / BCRC 21394 / JCM 1990 / NBRC 0083 / IGC 2968)</name>
    <name type="common">Yeast</name>
    <name type="synonym">Torulaspora hansenii</name>
    <dbReference type="NCBI Taxonomy" id="284592"/>
    <lineage>
        <taxon>Eukaryota</taxon>
        <taxon>Fungi</taxon>
        <taxon>Dikarya</taxon>
        <taxon>Ascomycota</taxon>
        <taxon>Saccharomycotina</taxon>
        <taxon>Pichiomycetes</taxon>
        <taxon>Debaryomycetaceae</taxon>
        <taxon>Debaryomyces</taxon>
    </lineage>
</organism>
<evidence type="ECO:0000250" key="1"/>
<evidence type="ECO:0000255" key="2"/>
<evidence type="ECO:0000305" key="3"/>
<proteinExistence type="inferred from homology"/>
<dbReference type="EMBL" id="CR382138">
    <property type="protein sequence ID" value="CAG89364.1"/>
    <property type="molecule type" value="Genomic_DNA"/>
</dbReference>
<dbReference type="RefSeq" id="XP_460998.1">
    <property type="nucleotide sequence ID" value="XM_460998.1"/>
</dbReference>
<dbReference type="SMR" id="Q6BLC3"/>
<dbReference type="FunCoup" id="Q6BLC3">
    <property type="interactions" value="78"/>
</dbReference>
<dbReference type="STRING" id="284592.Q6BLC3"/>
<dbReference type="GeneID" id="2903694"/>
<dbReference type="KEGG" id="dha:DEHA2F14630g"/>
<dbReference type="VEuPathDB" id="FungiDB:DEHA2F14630g"/>
<dbReference type="eggNOG" id="KOG4759">
    <property type="taxonomic scope" value="Eukaryota"/>
</dbReference>
<dbReference type="HOGENOM" id="CLU_085410_0_0_1"/>
<dbReference type="InParanoid" id="Q6BLC3"/>
<dbReference type="OMA" id="PNNDQQL"/>
<dbReference type="OrthoDB" id="407355at2759"/>
<dbReference type="Proteomes" id="UP000000599">
    <property type="component" value="Chromosome F"/>
</dbReference>
<dbReference type="GO" id="GO:0005739">
    <property type="term" value="C:mitochondrion"/>
    <property type="evidence" value="ECO:0007669"/>
    <property type="project" value="UniProtKB-SubCell"/>
</dbReference>
<dbReference type="GO" id="GO:0043023">
    <property type="term" value="F:ribosomal large subunit binding"/>
    <property type="evidence" value="ECO:0007669"/>
    <property type="project" value="TreeGrafter"/>
</dbReference>
<dbReference type="GO" id="GO:0032543">
    <property type="term" value="P:mitochondrial translation"/>
    <property type="evidence" value="ECO:0007669"/>
    <property type="project" value="EnsemblFungi"/>
</dbReference>
<dbReference type="Gene3D" id="3.30.1360.40">
    <property type="match status" value="1"/>
</dbReference>
<dbReference type="Gene3D" id="1.10.132.20">
    <property type="entry name" value="Ribosome-recycling factor"/>
    <property type="match status" value="1"/>
</dbReference>
<dbReference type="InterPro" id="IPR002661">
    <property type="entry name" value="Ribosome_recyc_fac"/>
</dbReference>
<dbReference type="InterPro" id="IPR023584">
    <property type="entry name" value="Ribosome_recyc_fac_dom"/>
</dbReference>
<dbReference type="InterPro" id="IPR036191">
    <property type="entry name" value="RRF_sf"/>
</dbReference>
<dbReference type="PANTHER" id="PTHR20982:SF3">
    <property type="entry name" value="MITOCHONDRIAL RIBOSOME RECYCLING FACTOR PSEUDO 1"/>
    <property type="match status" value="1"/>
</dbReference>
<dbReference type="PANTHER" id="PTHR20982">
    <property type="entry name" value="RIBOSOME RECYCLING FACTOR"/>
    <property type="match status" value="1"/>
</dbReference>
<dbReference type="Pfam" id="PF01765">
    <property type="entry name" value="RRF"/>
    <property type="match status" value="1"/>
</dbReference>
<dbReference type="SUPFAM" id="SSF55194">
    <property type="entry name" value="Ribosome recycling factor, RRF"/>
    <property type="match status" value="1"/>
</dbReference>
<protein>
    <recommendedName>
        <fullName>Ribosome-recycling factor, mitochondrial</fullName>
        <shortName>RRF</shortName>
    </recommendedName>
    <alternativeName>
        <fullName>Ribosome-releasing factor, mitochondrial</fullName>
    </alternativeName>
</protein>
<feature type="transit peptide" description="Mitochondrion" evidence="2">
    <location>
        <begin position="1"/>
        <end status="unknown"/>
    </location>
</feature>
<feature type="chain" id="PRO_0000031088" description="Ribosome-recycling factor, mitochondrial">
    <location>
        <begin status="unknown"/>
        <end position="257"/>
    </location>
</feature>
<sequence length="257" mass="28898">MLRLLTRSQAFRAVTLCQRPIISSRCIPIRNFQISPILAKKNKAKGGNKNKSEVQEIEEDNTDNQVPEIDFDDATNKFKGVIERFSKQANEAKLGKTSPNIFDKLIVETANGEVGFTSVAQTTVKGRNFMITVFDPSNVKSIINAVLGSDLNMNPQIDPSNKQTLKVPLPPLTTESKKENAKQLKLVYERFKNGSGRANGSLATIRGDVKNKFQKQHKKKKLSDAEEKVFKDFEKLHKQYTDKLTEVFKSAEQAILK</sequence>
<reference key="1">
    <citation type="journal article" date="2004" name="Nature">
        <title>Genome evolution in yeasts.</title>
        <authorList>
            <person name="Dujon B."/>
            <person name="Sherman D."/>
            <person name="Fischer G."/>
            <person name="Durrens P."/>
            <person name="Casaregola S."/>
            <person name="Lafontaine I."/>
            <person name="de Montigny J."/>
            <person name="Marck C."/>
            <person name="Neuveglise C."/>
            <person name="Talla E."/>
            <person name="Goffard N."/>
            <person name="Frangeul L."/>
            <person name="Aigle M."/>
            <person name="Anthouard V."/>
            <person name="Babour A."/>
            <person name="Barbe V."/>
            <person name="Barnay S."/>
            <person name="Blanchin S."/>
            <person name="Beckerich J.-M."/>
            <person name="Beyne E."/>
            <person name="Bleykasten C."/>
            <person name="Boisrame A."/>
            <person name="Boyer J."/>
            <person name="Cattolico L."/>
            <person name="Confanioleri F."/>
            <person name="de Daruvar A."/>
            <person name="Despons L."/>
            <person name="Fabre E."/>
            <person name="Fairhead C."/>
            <person name="Ferry-Dumazet H."/>
            <person name="Groppi A."/>
            <person name="Hantraye F."/>
            <person name="Hennequin C."/>
            <person name="Jauniaux N."/>
            <person name="Joyet P."/>
            <person name="Kachouri R."/>
            <person name="Kerrest A."/>
            <person name="Koszul R."/>
            <person name="Lemaire M."/>
            <person name="Lesur I."/>
            <person name="Ma L."/>
            <person name="Muller H."/>
            <person name="Nicaud J.-M."/>
            <person name="Nikolski M."/>
            <person name="Oztas S."/>
            <person name="Ozier-Kalogeropoulos O."/>
            <person name="Pellenz S."/>
            <person name="Potier S."/>
            <person name="Richard G.-F."/>
            <person name="Straub M.-L."/>
            <person name="Suleau A."/>
            <person name="Swennen D."/>
            <person name="Tekaia F."/>
            <person name="Wesolowski-Louvel M."/>
            <person name="Westhof E."/>
            <person name="Wirth B."/>
            <person name="Zeniou-Meyer M."/>
            <person name="Zivanovic Y."/>
            <person name="Bolotin-Fukuhara M."/>
            <person name="Thierry A."/>
            <person name="Bouchier C."/>
            <person name="Caudron B."/>
            <person name="Scarpelli C."/>
            <person name="Gaillardin C."/>
            <person name="Weissenbach J."/>
            <person name="Wincker P."/>
            <person name="Souciet J.-L."/>
        </authorList>
    </citation>
    <scope>NUCLEOTIDE SEQUENCE [LARGE SCALE GENOMIC DNA]</scope>
    <source>
        <strain>ATCC 36239 / CBS 767 / BCRC 21394 / JCM 1990 / NBRC 0083 / IGC 2968</strain>
    </source>
</reference>
<comment type="function">
    <text evidence="1">Necessary for protein synthesis in mitochondria. Functions as a ribosome recycling factor in mitochondria (By similarity).</text>
</comment>
<comment type="subcellular location">
    <subcellularLocation>
        <location evidence="1">Mitochondrion</location>
    </subcellularLocation>
</comment>
<comment type="similarity">
    <text evidence="3">Belongs to the RRF family.</text>
</comment>
<gene>
    <name type="primary">RRF1</name>
    <name type="ordered locus">DEHA2F14630g</name>
</gene>
<accession>Q6BLC3</accession>
<keyword id="KW-0496">Mitochondrion</keyword>
<keyword id="KW-0648">Protein biosynthesis</keyword>
<keyword id="KW-1185">Reference proteome</keyword>
<keyword id="KW-0809">Transit peptide</keyword>